<keyword id="KW-0025">Alternative splicing</keyword>
<keyword id="KW-0217">Developmental protein</keyword>
<keyword id="KW-0238">DNA-binding</keyword>
<keyword id="KW-0539">Nucleus</keyword>
<keyword id="KW-1185">Reference proteome</keyword>
<keyword id="KW-0677">Repeat</keyword>
<keyword id="KW-0804">Transcription</keyword>
<keyword id="KW-0805">Transcription regulation</keyword>
<organism>
    <name type="scientific">Arabidopsis thaliana</name>
    <name type="common">Mouse-ear cress</name>
    <dbReference type="NCBI Taxonomy" id="3702"/>
    <lineage>
        <taxon>Eukaryota</taxon>
        <taxon>Viridiplantae</taxon>
        <taxon>Streptophyta</taxon>
        <taxon>Embryophyta</taxon>
        <taxon>Tracheophyta</taxon>
        <taxon>Spermatophyta</taxon>
        <taxon>Magnoliopsida</taxon>
        <taxon>eudicotyledons</taxon>
        <taxon>Gunneridae</taxon>
        <taxon>Pentapetalae</taxon>
        <taxon>rosids</taxon>
        <taxon>malvids</taxon>
        <taxon>Brassicales</taxon>
        <taxon>Brassicaceae</taxon>
        <taxon>Camelineae</taxon>
        <taxon>Arabidopsis</taxon>
    </lineage>
</organism>
<evidence type="ECO:0000255" key="1">
    <source>
        <dbReference type="PROSITE-ProRule" id="PRU00625"/>
    </source>
</evidence>
<evidence type="ECO:0000256" key="2">
    <source>
        <dbReference type="SAM" id="MobiDB-lite"/>
    </source>
</evidence>
<evidence type="ECO:0000269" key="3">
    <source>
    </source>
</evidence>
<evidence type="ECO:0000269" key="4">
    <source>
    </source>
</evidence>
<evidence type="ECO:0000303" key="5">
    <source>
    </source>
</evidence>
<evidence type="ECO:0000303" key="6">
    <source>
    </source>
</evidence>
<evidence type="ECO:0000303" key="7">
    <source>
    </source>
</evidence>
<evidence type="ECO:0000305" key="8"/>
<evidence type="ECO:0000312" key="9">
    <source>
        <dbReference type="Araport" id="AT1G26780"/>
    </source>
</evidence>
<evidence type="ECO:0000312" key="10">
    <source>
        <dbReference type="EMBL" id="AAF87032.1"/>
    </source>
</evidence>
<accession>Q9LQX5</accession>
<accession>A0ME93</accession>
<accession>Q9C5P9</accession>
<feature type="chain" id="PRO_0000439515" description="Transcription factor MYB117">
    <location>
        <begin position="1"/>
        <end position="359"/>
    </location>
</feature>
<feature type="domain" description="HTH myb-type 1" evidence="1">
    <location>
        <begin position="93"/>
        <end position="144"/>
    </location>
</feature>
<feature type="domain" description="HTH myb-type 2" evidence="1">
    <location>
        <begin position="145"/>
        <end position="199"/>
    </location>
</feature>
<feature type="DNA-binding region" description="H-T-H motif" evidence="1">
    <location>
        <begin position="121"/>
        <end position="143"/>
    </location>
</feature>
<feature type="DNA-binding region" description="H-T-H motif" evidence="1">
    <location>
        <begin position="172"/>
        <end position="195"/>
    </location>
</feature>
<feature type="region of interest" description="Disordered" evidence="2">
    <location>
        <begin position="58"/>
        <end position="99"/>
    </location>
</feature>
<feature type="compositionally biased region" description="Low complexity" evidence="2">
    <location>
        <begin position="63"/>
        <end position="73"/>
    </location>
</feature>
<feature type="compositionally biased region" description="Low complexity" evidence="2">
    <location>
        <begin position="82"/>
        <end position="94"/>
    </location>
</feature>
<feature type="splice variant" id="VSP_058882" description="In isoform 2.">
    <original>YE</original>
    <variation>SL</variation>
    <location>
        <begin position="279"/>
        <end position="280"/>
    </location>
</feature>
<feature type="splice variant" id="VSP_058883" description="In isoform 2.">
    <location>
        <begin position="281"/>
        <end position="359"/>
    </location>
</feature>
<comment type="function">
    <text evidence="3 4">Probable transcription factor that involved in boundary specification, meristem initiation and maintenance, and organ patterning (PubMed:19542355, PubMed:21533201). Functions in both lateral organ separation and axillary meristem formation, in part through genetic interaction with the NAC domain genes CUC2 and CUC3 and the homeobox gene STM (PubMed:19542355). May be recruited by a variety of developmental programs for the development of floral organs and the initiation of ovule outgrowth (PubMed:21533201).</text>
</comment>
<comment type="subcellular location">
    <subcellularLocation>
        <location evidence="1">Nucleus</location>
    </subcellularLocation>
</comment>
<comment type="alternative products">
    <event type="alternative splicing"/>
    <isoform>
        <id>Q9LQX5-1</id>
        <name>1</name>
        <sequence type="displayed"/>
    </isoform>
    <isoform>
        <id>Q9LQX5-2</id>
        <name>2</name>
        <sequence type="described" ref="VSP_058882 VSP_058883"/>
    </isoform>
</comment>
<comment type="tissue specificity">
    <text evidence="3">Expressed in organ boundaries.</text>
</comment>
<comment type="disruption phenotype">
    <text evidence="3">Defects in organ separation due to abnormal cell division and expansion during early boundary formation. Failure in accessory shoot meristem formation.</text>
</comment>
<comment type="sequence caution" evidence="8">
    <conflict type="erroneous termination">
        <sequence resource="EMBL-CDS" id="ABK28416"/>
    </conflict>
    <text>Extended C-terminus.</text>
</comment>
<proteinExistence type="evidence at transcript level"/>
<protein>
    <recommendedName>
        <fullName evidence="8">Transcription factor MYB117</fullName>
    </recommendedName>
    <alternativeName>
        <fullName evidence="6">MYB-domain transcription factor LOF1</fullName>
    </alternativeName>
    <alternativeName>
        <fullName evidence="8">Myb-related protein 117</fullName>
        <shortName evidence="5">AtMYB117</shortName>
    </alternativeName>
    <alternativeName>
        <fullName evidence="7">Protein CONSTRICTED FRUIT</fullName>
    </alternativeName>
    <alternativeName>
        <fullName evidence="6">Protein LATERAL ORGAN FUSION 1</fullName>
    </alternativeName>
</protein>
<gene>
    <name evidence="5" type="primary">MYB117</name>
    <name evidence="7" type="synonym">CTF</name>
    <name evidence="6" type="synonym">LOF1</name>
    <name evidence="9" type="ordered locus">At1g26780</name>
    <name evidence="10" type="ORF">T24P13.16</name>
</gene>
<name>MY117_ARATH</name>
<sequence length="359" mass="41534">MFITEKQVWMDEIVARRASSSWDFPFNDINIHQHHHRHCNTSHEFEILKSPLGDVAVHEEESNNNNPNFSNSESGKKETTDSGQSWSSSSSKPSVLGRGHWRPAEDVKLKELVSIYGPQNWNLIAEKLQGRSGKSCRLRWFNQLDPRINRRAFTEEEEERLMQAHRLYGNKWAMIARLFPGRTDNSVKNHWHVVMARKYREHSSAYRRRKLMSNNPLKPHLTNNHHPNPNPNYHSFISTNHYFAQPFPEFNLTHHLVNNAPITSDHNQLVLPFHCFQGYENNEPPMVVSMFGNQMMVGDNVGATSDALCNIPHIDPSNQEKPEPNDAMHWIGMDAVDEEVFEKAKQQPHFFDFLGLGTA</sequence>
<reference key="1">
    <citation type="journal article" date="2001" name="Curr. Opin. Plant Biol.">
        <title>The R2R3-MYB gene family in Arabidopsis thaliana.</title>
        <authorList>
            <person name="Stracke R."/>
            <person name="Werber M."/>
            <person name="Weisshaar B."/>
        </authorList>
    </citation>
    <scope>NUCLEOTIDE SEQUENCE [MRNA] (ISOFORM 2)</scope>
    <scope>GENE FAMILY</scope>
    <scope>NOMENCLATURE</scope>
</reference>
<reference key="2">
    <citation type="submission" date="2004-01" db="EMBL/GenBank/DDBJ databases">
        <title>The MYB transcription factor family in Arabidopsis: A genome-wide cloning and expression pattern analysis.</title>
        <authorList>
            <person name="Qu L."/>
            <person name="Gu H."/>
        </authorList>
    </citation>
    <scope>NUCLEOTIDE SEQUENCE [MRNA] (ISOFORM 2)</scope>
</reference>
<reference key="3">
    <citation type="journal article" date="2000" name="Nature">
        <title>Sequence and analysis of chromosome 1 of the plant Arabidopsis thaliana.</title>
        <authorList>
            <person name="Theologis A."/>
            <person name="Ecker J.R."/>
            <person name="Palm C.J."/>
            <person name="Federspiel N.A."/>
            <person name="Kaul S."/>
            <person name="White O."/>
            <person name="Alonso J."/>
            <person name="Altafi H."/>
            <person name="Araujo R."/>
            <person name="Bowman C.L."/>
            <person name="Brooks S.Y."/>
            <person name="Buehler E."/>
            <person name="Chan A."/>
            <person name="Chao Q."/>
            <person name="Chen H."/>
            <person name="Cheuk R.F."/>
            <person name="Chin C.W."/>
            <person name="Chung M.K."/>
            <person name="Conn L."/>
            <person name="Conway A.B."/>
            <person name="Conway A.R."/>
            <person name="Creasy T.H."/>
            <person name="Dewar K."/>
            <person name="Dunn P."/>
            <person name="Etgu P."/>
            <person name="Feldblyum T.V."/>
            <person name="Feng J.-D."/>
            <person name="Fong B."/>
            <person name="Fujii C.Y."/>
            <person name="Gill J.E."/>
            <person name="Goldsmith A.D."/>
            <person name="Haas B."/>
            <person name="Hansen N.F."/>
            <person name="Hughes B."/>
            <person name="Huizar L."/>
            <person name="Hunter J.L."/>
            <person name="Jenkins J."/>
            <person name="Johnson-Hopson C."/>
            <person name="Khan S."/>
            <person name="Khaykin E."/>
            <person name="Kim C.J."/>
            <person name="Koo H.L."/>
            <person name="Kremenetskaia I."/>
            <person name="Kurtz D.B."/>
            <person name="Kwan A."/>
            <person name="Lam B."/>
            <person name="Langin-Hooper S."/>
            <person name="Lee A."/>
            <person name="Lee J.M."/>
            <person name="Lenz C.A."/>
            <person name="Li J.H."/>
            <person name="Li Y.-P."/>
            <person name="Lin X."/>
            <person name="Liu S.X."/>
            <person name="Liu Z.A."/>
            <person name="Luros J.S."/>
            <person name="Maiti R."/>
            <person name="Marziali A."/>
            <person name="Militscher J."/>
            <person name="Miranda M."/>
            <person name="Nguyen M."/>
            <person name="Nierman W.C."/>
            <person name="Osborne B.I."/>
            <person name="Pai G."/>
            <person name="Peterson J."/>
            <person name="Pham P.K."/>
            <person name="Rizzo M."/>
            <person name="Rooney T."/>
            <person name="Rowley D."/>
            <person name="Sakano H."/>
            <person name="Salzberg S.L."/>
            <person name="Schwartz J.R."/>
            <person name="Shinn P."/>
            <person name="Southwick A.M."/>
            <person name="Sun H."/>
            <person name="Tallon L.J."/>
            <person name="Tambunga G."/>
            <person name="Toriumi M.J."/>
            <person name="Town C.D."/>
            <person name="Utterback T."/>
            <person name="Van Aken S."/>
            <person name="Vaysberg M."/>
            <person name="Vysotskaia V.S."/>
            <person name="Walker M."/>
            <person name="Wu D."/>
            <person name="Yu G."/>
            <person name="Fraser C.M."/>
            <person name="Venter J.C."/>
            <person name="Davis R.W."/>
        </authorList>
    </citation>
    <scope>NUCLEOTIDE SEQUENCE [LARGE SCALE GENOMIC DNA]</scope>
    <source>
        <strain>cv. Columbia</strain>
    </source>
</reference>
<reference key="4">
    <citation type="journal article" date="2017" name="Plant J.">
        <title>Araport11: a complete reannotation of the Arabidopsis thaliana reference genome.</title>
        <authorList>
            <person name="Cheng C.Y."/>
            <person name="Krishnakumar V."/>
            <person name="Chan A.P."/>
            <person name="Thibaud-Nissen F."/>
            <person name="Schobel S."/>
            <person name="Town C.D."/>
        </authorList>
    </citation>
    <scope>GENOME REANNOTATION</scope>
    <source>
        <strain>cv. Columbia</strain>
    </source>
</reference>
<reference key="5">
    <citation type="journal article" date="2006" name="Plant Biotechnol. J.">
        <title>Simultaneous high-throughput recombinational cloning of open reading frames in closed and open configurations.</title>
        <authorList>
            <person name="Underwood B.A."/>
            <person name="Vanderhaeghen R."/>
            <person name="Whitford R."/>
            <person name="Town C.D."/>
            <person name="Hilson P."/>
        </authorList>
    </citation>
    <scope>NUCLEOTIDE SEQUENCE [LARGE SCALE MRNA] (ISOFORM 2)</scope>
    <source>
        <strain>cv. Columbia</strain>
    </source>
</reference>
<reference key="6">
    <citation type="journal article" date="2009" name="Development">
        <title>LATERAL ORGAN FUSION1 and LATERAL ORGAN FUSION2 function in lateral organ separation and axillary meristem formation in Arabidopsis.</title>
        <authorList>
            <person name="Lee D.K."/>
            <person name="Geisler M."/>
            <person name="Springer P.S."/>
        </authorList>
    </citation>
    <scope>FUNCTION</scope>
    <scope>TISSUE SPECIFICITY</scope>
    <scope>DISRUPTION PHENOTYPE</scope>
</reference>
<reference key="7">
    <citation type="journal article" date="2011" name="PLoS ONE">
        <title>Characterization of constricted fruit (ctf) mutant uncovers a role for AtMYB117/LOF1 in ovule and fruit development in Arabidopsis thaliana.</title>
        <authorList>
            <person name="Gomez M.D."/>
            <person name="Urbez C."/>
            <person name="Perez-Amador M.A."/>
            <person name="Carbonell J."/>
        </authorList>
    </citation>
    <scope>FUNCTION</scope>
</reference>
<dbReference type="EMBL" id="AF334816">
    <property type="protein sequence ID" value="AAK25749.1"/>
    <property type="molecule type" value="mRNA"/>
</dbReference>
<dbReference type="EMBL" id="AY519559">
    <property type="protein sequence ID" value="AAS10029.1"/>
    <property type="molecule type" value="mRNA"/>
</dbReference>
<dbReference type="EMBL" id="AC006535">
    <property type="protein sequence ID" value="AAF87032.1"/>
    <property type="molecule type" value="Genomic_DNA"/>
</dbReference>
<dbReference type="EMBL" id="CP002684">
    <property type="protein sequence ID" value="AEE30735.1"/>
    <property type="molecule type" value="Genomic_DNA"/>
</dbReference>
<dbReference type="EMBL" id="CP002684">
    <property type="protein sequence ID" value="AEE30736.1"/>
    <property type="molecule type" value="Genomic_DNA"/>
</dbReference>
<dbReference type="EMBL" id="DQ446291">
    <property type="protein sequence ID" value="ABE65656.1"/>
    <property type="molecule type" value="mRNA"/>
</dbReference>
<dbReference type="EMBL" id="DQ652862">
    <property type="protein sequence ID" value="ABK28416.1"/>
    <property type="status" value="ALT_SEQ"/>
    <property type="molecule type" value="mRNA"/>
</dbReference>
<dbReference type="PIR" id="D86394">
    <property type="entry name" value="D86394"/>
</dbReference>
<dbReference type="RefSeq" id="NP_001154369.1">
    <molecule id="Q9LQX5-1"/>
    <property type="nucleotide sequence ID" value="NM_001160897.2"/>
</dbReference>
<dbReference type="RefSeq" id="NP_564261.1">
    <molecule id="Q9LQX5-2"/>
    <property type="nucleotide sequence ID" value="NM_102441.3"/>
</dbReference>
<dbReference type="SMR" id="Q9LQX5"/>
<dbReference type="IntAct" id="Q9LQX5">
    <property type="interactions" value="31"/>
</dbReference>
<dbReference type="STRING" id="3702.Q9LQX5"/>
<dbReference type="PaxDb" id="3702-AT1G26780.2"/>
<dbReference type="EnsemblPlants" id="AT1G26780.1">
    <molecule id="Q9LQX5-2"/>
    <property type="protein sequence ID" value="AT1G26780.1"/>
    <property type="gene ID" value="AT1G26780"/>
</dbReference>
<dbReference type="EnsemblPlants" id="AT1G26780.2">
    <molecule id="Q9LQX5-1"/>
    <property type="protein sequence ID" value="AT1G26780.2"/>
    <property type="gene ID" value="AT1G26780"/>
</dbReference>
<dbReference type="GeneID" id="839219"/>
<dbReference type="Gramene" id="AT1G26780.1">
    <molecule id="Q9LQX5-2"/>
    <property type="protein sequence ID" value="AT1G26780.1"/>
    <property type="gene ID" value="AT1G26780"/>
</dbReference>
<dbReference type="Gramene" id="AT1G26780.2">
    <molecule id="Q9LQX5-1"/>
    <property type="protein sequence ID" value="AT1G26780.2"/>
    <property type="gene ID" value="AT1G26780"/>
</dbReference>
<dbReference type="KEGG" id="ath:AT1G26780"/>
<dbReference type="Araport" id="AT1G26780"/>
<dbReference type="TAIR" id="AT1G26780">
    <property type="gene designation" value="MYB117"/>
</dbReference>
<dbReference type="eggNOG" id="KOG0048">
    <property type="taxonomic scope" value="Eukaryota"/>
</dbReference>
<dbReference type="InParanoid" id="Q9LQX5"/>
<dbReference type="OMA" id="FGNQMMV"/>
<dbReference type="OrthoDB" id="2143914at2759"/>
<dbReference type="PhylomeDB" id="Q9LQX5"/>
<dbReference type="PRO" id="PR:Q9LQX5"/>
<dbReference type="Proteomes" id="UP000006548">
    <property type="component" value="Chromosome 1"/>
</dbReference>
<dbReference type="ExpressionAtlas" id="Q9LQX5">
    <property type="expression patterns" value="baseline and differential"/>
</dbReference>
<dbReference type="GO" id="GO:0005634">
    <property type="term" value="C:nucleus"/>
    <property type="evidence" value="ECO:0007669"/>
    <property type="project" value="UniProtKB-SubCell"/>
</dbReference>
<dbReference type="GO" id="GO:0003677">
    <property type="term" value="F:DNA binding"/>
    <property type="evidence" value="ECO:0007669"/>
    <property type="project" value="UniProtKB-KW"/>
</dbReference>
<dbReference type="GO" id="GO:0003700">
    <property type="term" value="F:DNA-binding transcription factor activity"/>
    <property type="evidence" value="ECO:0000250"/>
    <property type="project" value="TAIR"/>
</dbReference>
<dbReference type="GO" id="GO:0010199">
    <property type="term" value="P:organ boundary specification between lateral organs and the meristem"/>
    <property type="evidence" value="ECO:0000315"/>
    <property type="project" value="TAIR"/>
</dbReference>
<dbReference type="GO" id="GO:0006355">
    <property type="term" value="P:regulation of DNA-templated transcription"/>
    <property type="evidence" value="ECO:0000304"/>
    <property type="project" value="TAIR"/>
</dbReference>
<dbReference type="CDD" id="cd00167">
    <property type="entry name" value="SANT"/>
    <property type="match status" value="2"/>
</dbReference>
<dbReference type="FunFam" id="1.10.10.60:FF:000060">
    <property type="entry name" value="MYB transcription factor"/>
    <property type="match status" value="1"/>
</dbReference>
<dbReference type="FunFam" id="1.10.10.60:FF:000356">
    <property type="entry name" value="MYB transcription factor"/>
    <property type="match status" value="1"/>
</dbReference>
<dbReference type="Gene3D" id="1.10.10.60">
    <property type="entry name" value="Homeodomain-like"/>
    <property type="match status" value="2"/>
</dbReference>
<dbReference type="InterPro" id="IPR009057">
    <property type="entry name" value="Homeodomain-like_sf"/>
</dbReference>
<dbReference type="InterPro" id="IPR017930">
    <property type="entry name" value="Myb_dom"/>
</dbReference>
<dbReference type="InterPro" id="IPR050560">
    <property type="entry name" value="MYB_TF"/>
</dbReference>
<dbReference type="InterPro" id="IPR001005">
    <property type="entry name" value="SANT/Myb"/>
</dbReference>
<dbReference type="PANTHER" id="PTHR45614">
    <property type="entry name" value="MYB PROTEIN-RELATED"/>
    <property type="match status" value="1"/>
</dbReference>
<dbReference type="PANTHER" id="PTHR45614:SF175">
    <property type="entry name" value="TRANSCRIPTION FACTOR MYB105-RELATED"/>
    <property type="match status" value="1"/>
</dbReference>
<dbReference type="Pfam" id="PF00249">
    <property type="entry name" value="Myb_DNA-binding"/>
    <property type="match status" value="2"/>
</dbReference>
<dbReference type="SMART" id="SM00717">
    <property type="entry name" value="SANT"/>
    <property type="match status" value="2"/>
</dbReference>
<dbReference type="SUPFAM" id="SSF46689">
    <property type="entry name" value="Homeodomain-like"/>
    <property type="match status" value="1"/>
</dbReference>
<dbReference type="PROSITE" id="PS51294">
    <property type="entry name" value="HTH_MYB"/>
    <property type="match status" value="2"/>
</dbReference>